<keyword id="KW-0153">Cholesterol metabolism</keyword>
<keyword id="KW-0903">Direct protein sequencing</keyword>
<keyword id="KW-0325">Glycoprotein</keyword>
<keyword id="KW-0345">HDL</keyword>
<keyword id="KW-0443">Lipid metabolism</keyword>
<keyword id="KW-0445">Lipid transport</keyword>
<keyword id="KW-0449">Lipoprotein</keyword>
<keyword id="KW-0558">Oxidation</keyword>
<keyword id="KW-0564">Palmitate</keyword>
<keyword id="KW-0597">Phosphoprotein</keyword>
<keyword id="KW-1185">Reference proteome</keyword>
<keyword id="KW-0677">Repeat</keyword>
<keyword id="KW-0964">Secreted</keyword>
<keyword id="KW-0732">Signal</keyword>
<keyword id="KW-0753">Steroid metabolism</keyword>
<keyword id="KW-1207">Sterol metabolism</keyword>
<keyword id="KW-0813">Transport</keyword>
<feature type="signal peptide">
    <location>
        <begin position="1"/>
        <end position="18"/>
    </location>
</feature>
<feature type="chain" id="PRO_0000425324" description="Proapolipoprotein A-I">
    <location>
        <begin position="19"/>
        <end position="267"/>
    </location>
</feature>
<feature type="chain" id="PRO_0000001942" description="Apolipoprotein A-I">
    <location>
        <begin position="25"/>
        <end position="267"/>
    </location>
</feature>
<feature type="chain" id="PRO_0000416574" description="Truncated apolipoprotein A-I" evidence="1">
    <location>
        <begin position="25"/>
        <end position="266"/>
    </location>
</feature>
<feature type="repeat" description="1">
    <location>
        <begin position="68"/>
        <end position="89"/>
    </location>
</feature>
<feature type="repeat" description="2">
    <location>
        <begin position="90"/>
        <end position="111"/>
    </location>
</feature>
<feature type="repeat" description="3; half-length">
    <location>
        <begin position="112"/>
        <end position="122"/>
    </location>
</feature>
<feature type="repeat" description="4">
    <location>
        <begin position="123"/>
        <end position="144"/>
    </location>
</feature>
<feature type="repeat" description="5">
    <location>
        <begin position="145"/>
        <end position="166"/>
    </location>
</feature>
<feature type="repeat" description="6">
    <location>
        <begin position="167"/>
        <end position="188"/>
    </location>
</feature>
<feature type="repeat" description="7">
    <location>
        <begin position="189"/>
        <end position="210"/>
    </location>
</feature>
<feature type="repeat" description="8">
    <location>
        <begin position="211"/>
        <end position="232"/>
    </location>
</feature>
<feature type="repeat" description="9; half-length">
    <location>
        <begin position="233"/>
        <end position="243"/>
    </location>
</feature>
<feature type="repeat" description="10">
    <location>
        <begin position="244"/>
        <end position="267"/>
    </location>
</feature>
<feature type="region of interest" description="10 X approximate tandem repeats">
    <location>
        <begin position="68"/>
        <end position="267"/>
    </location>
</feature>
<feature type="modified residue" description="Methionine sulfoxide" evidence="1">
    <location>
        <position position="110"/>
    </location>
</feature>
<feature type="modified residue" description="Methionine sulfoxide" evidence="1">
    <location>
        <position position="136"/>
    </location>
</feature>
<feature type="sequence conflict" description="In Ref. 1; AAA36834." evidence="5" ref="1">
    <original>L</original>
    <variation>P</variation>
    <location>
        <position position="13"/>
    </location>
</feature>
<dbReference type="EMBL" id="M15411">
    <property type="protein sequence ID" value="AAA36834.1"/>
    <property type="molecule type" value="mRNA"/>
</dbReference>
<dbReference type="EMBL" id="M83242">
    <property type="protein sequence ID" value="AAA36832.1"/>
    <property type="molecule type" value="Genomic_DNA"/>
</dbReference>
<dbReference type="EMBL" id="M69223">
    <property type="protein sequence ID" value="AAA36831.1"/>
    <property type="molecule type" value="Genomic_DNA"/>
</dbReference>
<dbReference type="PIR" id="A26529">
    <property type="entry name" value="A26529"/>
</dbReference>
<dbReference type="RefSeq" id="NP_001270674.1">
    <property type="nucleotide sequence ID" value="NM_001283745.1"/>
</dbReference>
<dbReference type="RefSeq" id="XP_015290827.1">
    <property type="nucleotide sequence ID" value="XM_015435341.1"/>
</dbReference>
<dbReference type="RefSeq" id="XP_045226042.2">
    <property type="nucleotide sequence ID" value="XM_045370107.2"/>
</dbReference>
<dbReference type="RefSeq" id="XP_045226043.2">
    <property type="nucleotide sequence ID" value="XM_045370108.2"/>
</dbReference>
<dbReference type="SMR" id="P68292"/>
<dbReference type="STRING" id="9541.ENSMFAP00000037249"/>
<dbReference type="GeneID" id="101925978"/>
<dbReference type="VEuPathDB" id="HostDB:ENSMFAG00000037868"/>
<dbReference type="eggNOG" id="ENOG502S1XQ">
    <property type="taxonomic scope" value="Eukaryota"/>
</dbReference>
<dbReference type="OMA" id="EYVAQFE"/>
<dbReference type="Proteomes" id="UP000233100">
    <property type="component" value="Chromosome 14"/>
</dbReference>
<dbReference type="GO" id="GO:0042627">
    <property type="term" value="C:chylomicron"/>
    <property type="evidence" value="ECO:0007669"/>
    <property type="project" value="TreeGrafter"/>
</dbReference>
<dbReference type="GO" id="GO:1903561">
    <property type="term" value="C:extracellular vesicle"/>
    <property type="evidence" value="ECO:0007669"/>
    <property type="project" value="TreeGrafter"/>
</dbReference>
<dbReference type="GO" id="GO:0034364">
    <property type="term" value="C:high-density lipoprotein particle"/>
    <property type="evidence" value="ECO:0007669"/>
    <property type="project" value="UniProtKB-KW"/>
</dbReference>
<dbReference type="GO" id="GO:0034362">
    <property type="term" value="C:low-density lipoprotein particle"/>
    <property type="evidence" value="ECO:0007669"/>
    <property type="project" value="TreeGrafter"/>
</dbReference>
<dbReference type="GO" id="GO:0034361">
    <property type="term" value="C:very-low-density lipoprotein particle"/>
    <property type="evidence" value="ECO:0007669"/>
    <property type="project" value="TreeGrafter"/>
</dbReference>
<dbReference type="GO" id="GO:0120020">
    <property type="term" value="F:cholesterol transfer activity"/>
    <property type="evidence" value="ECO:0007669"/>
    <property type="project" value="TreeGrafter"/>
</dbReference>
<dbReference type="GO" id="GO:0060228">
    <property type="term" value="F:phosphatidylcholine-sterol O-acyltransferase activator activity"/>
    <property type="evidence" value="ECO:0007669"/>
    <property type="project" value="TreeGrafter"/>
</dbReference>
<dbReference type="GO" id="GO:0005543">
    <property type="term" value="F:phospholipid binding"/>
    <property type="evidence" value="ECO:0007669"/>
    <property type="project" value="TreeGrafter"/>
</dbReference>
<dbReference type="GO" id="GO:0042803">
    <property type="term" value="F:protein homodimerization activity"/>
    <property type="evidence" value="ECO:0000250"/>
    <property type="project" value="UniProtKB"/>
</dbReference>
<dbReference type="GO" id="GO:0055090">
    <property type="term" value="P:acylglycerol homeostasis"/>
    <property type="evidence" value="ECO:0007669"/>
    <property type="project" value="TreeGrafter"/>
</dbReference>
<dbReference type="GO" id="GO:0033344">
    <property type="term" value="P:cholesterol efflux"/>
    <property type="evidence" value="ECO:0007669"/>
    <property type="project" value="TreeGrafter"/>
</dbReference>
<dbReference type="GO" id="GO:0008203">
    <property type="term" value="P:cholesterol metabolic process"/>
    <property type="evidence" value="ECO:0007669"/>
    <property type="project" value="UniProtKB-KW"/>
</dbReference>
<dbReference type="GO" id="GO:0042157">
    <property type="term" value="P:lipoprotein metabolic process"/>
    <property type="evidence" value="ECO:0007669"/>
    <property type="project" value="InterPro"/>
</dbReference>
<dbReference type="GO" id="GO:0018206">
    <property type="term" value="P:peptidyl-methionine modification"/>
    <property type="evidence" value="ECO:0000250"/>
    <property type="project" value="UniProtKB"/>
</dbReference>
<dbReference type="GO" id="GO:0033700">
    <property type="term" value="P:phospholipid efflux"/>
    <property type="evidence" value="ECO:0007669"/>
    <property type="project" value="TreeGrafter"/>
</dbReference>
<dbReference type="GO" id="GO:0010875">
    <property type="term" value="P:positive regulation of cholesterol efflux"/>
    <property type="evidence" value="ECO:0000250"/>
    <property type="project" value="UniProtKB"/>
</dbReference>
<dbReference type="GO" id="GO:0050766">
    <property type="term" value="P:positive regulation of phagocytosis"/>
    <property type="evidence" value="ECO:0000250"/>
    <property type="project" value="UniProtKB"/>
</dbReference>
<dbReference type="GO" id="GO:1902995">
    <property type="term" value="P:positive regulation of phospholipid efflux"/>
    <property type="evidence" value="ECO:0000250"/>
    <property type="project" value="UniProtKB"/>
</dbReference>
<dbReference type="GO" id="GO:0018158">
    <property type="term" value="P:protein oxidation"/>
    <property type="evidence" value="ECO:0000250"/>
    <property type="project" value="UniProtKB"/>
</dbReference>
<dbReference type="GO" id="GO:0050821">
    <property type="term" value="P:protein stabilization"/>
    <property type="evidence" value="ECO:0000250"/>
    <property type="project" value="UniProtKB"/>
</dbReference>
<dbReference type="FunFam" id="1.20.120.20:FF:000001">
    <property type="entry name" value="Apolipoprotein A-I"/>
    <property type="match status" value="1"/>
</dbReference>
<dbReference type="FunFam" id="1.20.5.20:FF:000001">
    <property type="entry name" value="apolipoprotein A-I"/>
    <property type="match status" value="1"/>
</dbReference>
<dbReference type="Gene3D" id="1.20.5.20">
    <property type="match status" value="1"/>
</dbReference>
<dbReference type="Gene3D" id="6.10.140.380">
    <property type="match status" value="1"/>
</dbReference>
<dbReference type="Gene3D" id="1.20.120.20">
    <property type="entry name" value="Apolipoprotein"/>
    <property type="match status" value="1"/>
</dbReference>
<dbReference type="InterPro" id="IPR000074">
    <property type="entry name" value="ApoA_E"/>
</dbReference>
<dbReference type="InterPro" id="IPR050163">
    <property type="entry name" value="Apolipoprotein_A1/A4/E"/>
</dbReference>
<dbReference type="PANTHER" id="PTHR18976">
    <property type="entry name" value="APOLIPOPROTEIN"/>
    <property type="match status" value="1"/>
</dbReference>
<dbReference type="PANTHER" id="PTHR18976:SF11">
    <property type="entry name" value="APOLIPOPROTEIN A-I"/>
    <property type="match status" value="1"/>
</dbReference>
<dbReference type="Pfam" id="PF01442">
    <property type="entry name" value="Apolipoprotein"/>
    <property type="match status" value="1"/>
</dbReference>
<dbReference type="SUPFAM" id="SSF58113">
    <property type="entry name" value="Apolipoprotein A-I"/>
    <property type="match status" value="1"/>
</dbReference>
<sequence>MKATVLTLAVLFLTGSQARHFWQQDEPPQTPWDRVKDLVTVYVEALKDSGKDYVSQFEGSALGKQLNLKLLDNWDSVTSTVSKLREQLGPVTQEFWDNLEKETEGLRQEMSKDLEEVKAKVQPYLDDFQKKWQEEMELYRQKVEPLRAELHEGTRQKLHELHEKLSPLGEEVRDRARAHVDALRTHLAPYSDELRQRLAARLEALKENGGARLAEYHAKASEHLSTLSEKAKPALEDLRQGLLPVLESFKVSFLSALEEYTKKLSTQ</sequence>
<accession>P68292</accession>
<accession>P15568</accession>
<accession>P17929</accession>
<proteinExistence type="evidence at protein level"/>
<name>APOA1_MACFA</name>
<gene>
    <name type="primary">APOA1</name>
</gene>
<reference key="1">
    <citation type="journal article" date="1986" name="Gene">
        <title>The primary structure of cynomolgus monkey apolipoprotein A-1 deduced from the cDNA sequence: comparison to the human sequence.</title>
        <authorList>
            <person name="Polites H.G."/>
            <person name="Melchior G.W."/>
            <person name="Castle C.K."/>
            <person name="Marotti K.R."/>
        </authorList>
    </citation>
    <scope>NUCLEOTIDE SEQUENCE [MRNA]</scope>
</reference>
<reference key="2">
    <citation type="journal article" date="1992" name="Biochim. Biophys. Acta">
        <title>Nucleotide sequence of the cynomolgus monkey apolipoprotein A-I gene and corresponding flanking regions.</title>
        <authorList>
            <person name="Murray R.W."/>
            <person name="Marotti K.R."/>
        </authorList>
    </citation>
    <scope>NUCLEOTIDE SEQUENCE [GENOMIC DNA]</scope>
</reference>
<reference key="3">
    <citation type="journal article" date="1991" name="J. Biol. Chem.">
        <title>Transcriptional regulation of the apolipoprotein A-I gene. Species-specific expression correlates with rates of gene transcription.</title>
        <authorList>
            <person name="Sorci-Thomas M."/>
            <person name="Kearns M.W."/>
        </authorList>
    </citation>
    <scope>NUCLEOTIDE SEQUENCE [GENOMIC DNA] OF 1-10</scope>
</reference>
<reference key="4">
    <citation type="journal article" date="1987" name="Biochemistry">
        <title>Homologues of the human C and A apolipoproteins in the Macaca fascicularis (cynomolgus) monkey.</title>
        <authorList>
            <person name="Herbert P.N."/>
            <person name="Bausserman L.L."/>
            <person name="Lynch K.M."/>
            <person name="Saritelli A.L."/>
            <person name="Kantor M.A."/>
            <person name="Nicolosi R.J."/>
            <person name="Shulman R.S."/>
        </authorList>
    </citation>
    <scope>PROTEIN SEQUENCE OF 25-48</scope>
</reference>
<protein>
    <recommendedName>
        <fullName>Apolipoprotein A-I</fullName>
        <shortName>Apo-AI</shortName>
        <shortName>ApoA-I</shortName>
    </recommendedName>
    <alternativeName>
        <fullName>Apolipoprotein A1</fullName>
    </alternativeName>
    <component>
        <recommendedName>
            <fullName>Proapolipoprotein A-I</fullName>
            <shortName>ProapoA-I</shortName>
        </recommendedName>
    </component>
    <component>
        <recommendedName>
            <fullName>Truncated apolipoprotein A-I</fullName>
        </recommendedName>
    </component>
</protein>
<evidence type="ECO:0000250" key="1"/>
<evidence type="ECO:0000250" key="2">
    <source>
        <dbReference type="UniProtKB" id="G5BQH5"/>
    </source>
</evidence>
<evidence type="ECO:0000250" key="3">
    <source>
        <dbReference type="UniProtKB" id="P02647"/>
    </source>
</evidence>
<evidence type="ECO:0000250" key="4">
    <source>
        <dbReference type="UniProtKB" id="P04639"/>
    </source>
</evidence>
<evidence type="ECO:0000305" key="5"/>
<organism>
    <name type="scientific">Macaca fascicularis</name>
    <name type="common">Crab-eating macaque</name>
    <name type="synonym">Cynomolgus monkey</name>
    <dbReference type="NCBI Taxonomy" id="9541"/>
    <lineage>
        <taxon>Eukaryota</taxon>
        <taxon>Metazoa</taxon>
        <taxon>Chordata</taxon>
        <taxon>Craniata</taxon>
        <taxon>Vertebrata</taxon>
        <taxon>Euteleostomi</taxon>
        <taxon>Mammalia</taxon>
        <taxon>Eutheria</taxon>
        <taxon>Euarchontoglires</taxon>
        <taxon>Primates</taxon>
        <taxon>Haplorrhini</taxon>
        <taxon>Catarrhini</taxon>
        <taxon>Cercopithecidae</taxon>
        <taxon>Cercopithecinae</taxon>
        <taxon>Macaca</taxon>
    </lineage>
</organism>
<comment type="function">
    <text>Participates in the reverse transport of cholesterol from tissues to the liver for excretion by promoting cholesterol efflux from tissues and by acting as a cofactor for the lecithin cholesterol acyltransferase (LCAT). As part of the SPAP complex, activates spermatozoa motility.</text>
</comment>
<comment type="subunit">
    <text evidence="2 3 4">Homodimer (By similarity). Interacts with APOA1BP and CLU. Component of a sperm activating protein complex (SPAP), consisting of APOA1, an immunoglobulin heavy chain, an immunoglobulin light chain and albumin. Interacts with NDRG1. Interacts with SCGB3A2 (By similarity). Interacts with NAXE and YJEFN3 (By similarity).</text>
</comment>
<comment type="subcellular location">
    <subcellularLocation>
        <location>Secreted</location>
    </subcellularLocation>
</comment>
<comment type="tissue specificity">
    <text>Major protein of plasma HDL, also found in chylomicrons.</text>
</comment>
<comment type="PTM">
    <text evidence="1">Glycosylated.</text>
</comment>
<comment type="PTM">
    <text evidence="1">Palmitoylated.</text>
</comment>
<comment type="PTM">
    <text evidence="1">Phosphorylation sites are present in the extracellular medium.</text>
</comment>
<comment type="similarity">
    <text evidence="5">Belongs to the apolipoprotein A1/A4/E family.</text>
</comment>